<protein>
    <recommendedName>
        <fullName evidence="2">Transmembrane emp24 domain-containing protein bai</fullName>
    </recommendedName>
</protein>
<keyword id="KW-0217">Developmental protein</keyword>
<keyword id="KW-0472">Membrane</keyword>
<keyword id="KW-1185">Reference proteome</keyword>
<keyword id="KW-0732">Signal</keyword>
<keyword id="KW-0812">Transmembrane</keyword>
<keyword id="KW-1133">Transmembrane helix</keyword>
<evidence type="ECO:0000250" key="1"/>
<evidence type="ECO:0000250" key="2">
    <source>
        <dbReference type="UniProtKB" id="Q8SXY6"/>
    </source>
</evidence>
<evidence type="ECO:0000255" key="3"/>
<evidence type="ECO:0000255" key="4">
    <source>
        <dbReference type="PROSITE-ProRule" id="PRU00096"/>
    </source>
</evidence>
<evidence type="ECO:0000305" key="5"/>
<evidence type="ECO:0000312" key="6">
    <source>
        <dbReference type="EMBL" id="EDV98560.1"/>
    </source>
</evidence>
<name>TMEDA_DROGR</name>
<reference evidence="6" key="1">
    <citation type="journal article" date="2007" name="Nature">
        <title>Evolution of genes and genomes on the Drosophila phylogeny.</title>
        <authorList>
            <consortium name="Drosophila 12 genomes consortium"/>
        </authorList>
    </citation>
    <scope>NUCLEOTIDE SEQUENCE [LARGE SCALE GENOMIC DNA]</scope>
    <source>
        <strain evidence="6">Tucson 15287-2541.00</strain>
    </source>
</reference>
<accession>B4JYU5</accession>
<dbReference type="EMBL" id="CH916378">
    <property type="protein sequence ID" value="EDV98560.1"/>
    <property type="status" value="ALT_INIT"/>
    <property type="molecule type" value="Genomic_DNA"/>
</dbReference>
<dbReference type="RefSeq" id="XP_001996199.1">
    <property type="nucleotide sequence ID" value="XM_001996163.1"/>
</dbReference>
<dbReference type="SMR" id="B4JYU5"/>
<dbReference type="FunCoup" id="B4JYU5">
    <property type="interactions" value="2404"/>
</dbReference>
<dbReference type="STRING" id="7222.B4JYU5"/>
<dbReference type="EnsemblMetazoa" id="FBtr0462106">
    <property type="protein sequence ID" value="FBpp0412483"/>
    <property type="gene ID" value="FBgn0129795"/>
</dbReference>
<dbReference type="EnsemblMetazoa" id="XM_001996163.2">
    <property type="protein sequence ID" value="XP_001996199.2"/>
    <property type="gene ID" value="LOC6569927"/>
</dbReference>
<dbReference type="GeneID" id="6569927"/>
<dbReference type="KEGG" id="dgr:6569927"/>
<dbReference type="CTD" id="42996"/>
<dbReference type="eggNOG" id="KOG1691">
    <property type="taxonomic scope" value="Eukaryota"/>
</dbReference>
<dbReference type="InParanoid" id="B4JYU5"/>
<dbReference type="OrthoDB" id="759142at2759"/>
<dbReference type="ChiTaRS" id="bai">
    <property type="organism name" value="fly"/>
</dbReference>
<dbReference type="Proteomes" id="UP000001070">
    <property type="component" value="Unassembled WGS sequence"/>
</dbReference>
<dbReference type="GO" id="GO:0005737">
    <property type="term" value="C:cytoplasm"/>
    <property type="evidence" value="ECO:0007669"/>
    <property type="project" value="GOC"/>
</dbReference>
<dbReference type="GO" id="GO:0016020">
    <property type="term" value="C:membrane"/>
    <property type="evidence" value="ECO:0007669"/>
    <property type="project" value="UniProtKB-SubCell"/>
</dbReference>
<dbReference type="GO" id="GO:0038024">
    <property type="term" value="F:cargo receptor activity"/>
    <property type="evidence" value="ECO:0007669"/>
    <property type="project" value="EnsemblMetazoa"/>
</dbReference>
<dbReference type="GO" id="GO:0009953">
    <property type="term" value="P:dorsal/ventral pattern formation"/>
    <property type="evidence" value="ECO:0000250"/>
    <property type="project" value="UniProtKB"/>
</dbReference>
<dbReference type="GO" id="GO:0006888">
    <property type="term" value="P:endoplasmic reticulum to Golgi vesicle-mediated transport"/>
    <property type="evidence" value="ECO:0007669"/>
    <property type="project" value="EnsemblMetazoa"/>
</dbReference>
<dbReference type="InterPro" id="IPR015720">
    <property type="entry name" value="Emp24-like"/>
</dbReference>
<dbReference type="InterPro" id="IPR009038">
    <property type="entry name" value="GOLD_dom"/>
</dbReference>
<dbReference type="PANTHER" id="PTHR22811">
    <property type="entry name" value="TRANSMEMBRANE EMP24 DOMAIN-CONTAINING PROTEIN"/>
    <property type="match status" value="1"/>
</dbReference>
<dbReference type="Pfam" id="PF01105">
    <property type="entry name" value="EMP24_GP25L"/>
    <property type="match status" value="1"/>
</dbReference>
<dbReference type="SMART" id="SM01190">
    <property type="entry name" value="EMP24_GP25L"/>
    <property type="match status" value="1"/>
</dbReference>
<dbReference type="PROSITE" id="PS50866">
    <property type="entry name" value="GOLD"/>
    <property type="match status" value="1"/>
</dbReference>
<organism>
    <name type="scientific">Drosophila grimshawi</name>
    <name type="common">Hawaiian fruit fly</name>
    <name type="synonym">Idiomyia grimshawi</name>
    <dbReference type="NCBI Taxonomy" id="7222"/>
    <lineage>
        <taxon>Eukaryota</taxon>
        <taxon>Metazoa</taxon>
        <taxon>Ecdysozoa</taxon>
        <taxon>Arthropoda</taxon>
        <taxon>Hexapoda</taxon>
        <taxon>Insecta</taxon>
        <taxon>Pterygota</taxon>
        <taxon>Neoptera</taxon>
        <taxon>Endopterygota</taxon>
        <taxon>Diptera</taxon>
        <taxon>Brachycera</taxon>
        <taxon>Muscomorpha</taxon>
        <taxon>Ephydroidea</taxon>
        <taxon>Drosophilidae</taxon>
        <taxon>Drosophila</taxon>
        <taxon>Hawaiian Drosophila</taxon>
    </lineage>
</organism>
<gene>
    <name evidence="2" type="primary">bai</name>
    <name type="ORF">GH22337</name>
</gene>
<sequence>MLKSLLCILLIFGCLCRIHGVMFHLTPNTQKCLKEDIQANQLVMGEYEVSDVPGQIIDYIARDTKGHILSQKEHITKGKFSFTSEVFDAYEICFISKVPPHQRGISQEVSLVTKKGVETKNYEGIGEASKLKPLEVDLKRLEDLSDSIVRDFAVMRKREEEMRDTNEKTNSRVLFFSIFSMCCLLGLATWQVLYLRRYFKAKKLIE</sequence>
<comment type="function">
    <text evidence="2">Eca and bai are essential, though not redundant, for dorsoventral patterning of the embryo. Specifically required during early embryogenesis for the activity of maternal tkv, while the zygotic tkv is not affected (By similarity).</text>
</comment>
<comment type="subcellular location">
    <subcellularLocation>
        <location evidence="1">Membrane</location>
        <topology evidence="3">Single-pass type I membrane protein</topology>
    </subcellularLocation>
</comment>
<comment type="similarity">
    <text evidence="3">Belongs to the EMP24/GP25L family.</text>
</comment>
<comment type="sequence caution" evidence="5">
    <conflict type="erroneous initiation">
        <sequence resource="EMBL-CDS" id="EDV98560"/>
    </conflict>
    <text>Truncated N-terminus.</text>
</comment>
<feature type="signal peptide" evidence="3">
    <location>
        <begin position="1"/>
        <end position="20"/>
    </location>
</feature>
<feature type="chain" id="PRO_0000393916" description="Transmembrane emp24 domain-containing protein bai" evidence="3">
    <location>
        <begin position="21"/>
        <end position="206"/>
    </location>
</feature>
<feature type="topological domain" description="Lumenal" evidence="3">
    <location>
        <begin position="21"/>
        <end position="172"/>
    </location>
</feature>
<feature type="transmembrane region" description="Helical" evidence="3">
    <location>
        <begin position="173"/>
        <end position="193"/>
    </location>
</feature>
<feature type="topological domain" description="Cytoplasmic" evidence="3">
    <location>
        <begin position="194"/>
        <end position="206"/>
    </location>
</feature>
<feature type="domain" description="GOLD" evidence="4">
    <location>
        <begin position="30"/>
        <end position="140"/>
    </location>
</feature>
<proteinExistence type="inferred from homology"/>